<gene>
    <name evidence="1" type="primary">trhO</name>
    <name type="ordered locus">VS_II1404</name>
</gene>
<protein>
    <recommendedName>
        <fullName evidence="1">tRNA uridine(34) hydroxylase</fullName>
        <ecNumber evidence="1">1.14.-.-</ecNumber>
    </recommendedName>
    <alternativeName>
        <fullName evidence="1">tRNA hydroxylation protein O</fullName>
    </alternativeName>
</protein>
<feature type="chain" id="PRO_1000135483" description="tRNA uridine(34) hydroxylase">
    <location>
        <begin position="1"/>
        <end position="329"/>
    </location>
</feature>
<feature type="domain" description="Rhodanese" evidence="1">
    <location>
        <begin position="123"/>
        <end position="217"/>
    </location>
</feature>
<feature type="region of interest" description="Disordered" evidence="2">
    <location>
        <begin position="285"/>
        <end position="329"/>
    </location>
</feature>
<feature type="compositionally biased region" description="Basic and acidic residues" evidence="2">
    <location>
        <begin position="296"/>
        <end position="323"/>
    </location>
</feature>
<feature type="active site" description="Cysteine persulfide intermediate" evidence="1">
    <location>
        <position position="177"/>
    </location>
</feature>
<dbReference type="EC" id="1.14.-.-" evidence="1"/>
<dbReference type="EMBL" id="FM954973">
    <property type="protein sequence ID" value="CAV27529.1"/>
    <property type="molecule type" value="Genomic_DNA"/>
</dbReference>
<dbReference type="SMR" id="B7VTF0"/>
<dbReference type="STRING" id="575788.VS_II1404"/>
<dbReference type="KEGG" id="vsp:VS_II1404"/>
<dbReference type="PATRIC" id="fig|575788.5.peg.1302"/>
<dbReference type="eggNOG" id="COG1054">
    <property type="taxonomic scope" value="Bacteria"/>
</dbReference>
<dbReference type="HOGENOM" id="CLU_038878_0_0_6"/>
<dbReference type="Proteomes" id="UP000009100">
    <property type="component" value="Chromosome 2"/>
</dbReference>
<dbReference type="GO" id="GO:0016705">
    <property type="term" value="F:oxidoreductase activity, acting on paired donors, with incorporation or reduction of molecular oxygen"/>
    <property type="evidence" value="ECO:0007669"/>
    <property type="project" value="UniProtKB-UniRule"/>
</dbReference>
<dbReference type="GO" id="GO:0006400">
    <property type="term" value="P:tRNA modification"/>
    <property type="evidence" value="ECO:0007669"/>
    <property type="project" value="UniProtKB-UniRule"/>
</dbReference>
<dbReference type="CDD" id="cd01518">
    <property type="entry name" value="RHOD_YceA"/>
    <property type="match status" value="1"/>
</dbReference>
<dbReference type="Gene3D" id="3.30.70.100">
    <property type="match status" value="1"/>
</dbReference>
<dbReference type="Gene3D" id="3.40.250.10">
    <property type="entry name" value="Rhodanese-like domain"/>
    <property type="match status" value="1"/>
</dbReference>
<dbReference type="HAMAP" id="MF_00469">
    <property type="entry name" value="TrhO"/>
    <property type="match status" value="1"/>
</dbReference>
<dbReference type="InterPro" id="IPR001763">
    <property type="entry name" value="Rhodanese-like_dom"/>
</dbReference>
<dbReference type="InterPro" id="IPR036873">
    <property type="entry name" value="Rhodanese-like_dom_sf"/>
</dbReference>
<dbReference type="InterPro" id="IPR020936">
    <property type="entry name" value="TrhO"/>
</dbReference>
<dbReference type="InterPro" id="IPR040503">
    <property type="entry name" value="TRHO_N"/>
</dbReference>
<dbReference type="NCBIfam" id="NF001136">
    <property type="entry name" value="PRK00142.1-4"/>
    <property type="match status" value="1"/>
</dbReference>
<dbReference type="PANTHER" id="PTHR43268:SF3">
    <property type="entry name" value="RHODANESE-LIKE DOMAIN-CONTAINING PROTEIN 7-RELATED"/>
    <property type="match status" value="1"/>
</dbReference>
<dbReference type="PANTHER" id="PTHR43268">
    <property type="entry name" value="THIOSULFATE SULFURTRANSFERASE/RHODANESE-LIKE DOMAIN-CONTAINING PROTEIN 2"/>
    <property type="match status" value="1"/>
</dbReference>
<dbReference type="Pfam" id="PF00581">
    <property type="entry name" value="Rhodanese"/>
    <property type="match status" value="1"/>
</dbReference>
<dbReference type="Pfam" id="PF17773">
    <property type="entry name" value="UPF0176_N"/>
    <property type="match status" value="1"/>
</dbReference>
<dbReference type="SMART" id="SM00450">
    <property type="entry name" value="RHOD"/>
    <property type="match status" value="1"/>
</dbReference>
<dbReference type="SUPFAM" id="SSF52821">
    <property type="entry name" value="Rhodanese/Cell cycle control phosphatase"/>
    <property type="match status" value="1"/>
</dbReference>
<dbReference type="PROSITE" id="PS50206">
    <property type="entry name" value="RHODANESE_3"/>
    <property type="match status" value="1"/>
</dbReference>
<keyword id="KW-0560">Oxidoreductase</keyword>
<keyword id="KW-0819">tRNA processing</keyword>
<name>TRHO_VIBA3</name>
<proteinExistence type="inferred from homology"/>
<organism>
    <name type="scientific">Vibrio atlanticus (strain LGP32)</name>
    <name type="common">Vibrio splendidus (strain Mel32)</name>
    <dbReference type="NCBI Taxonomy" id="575788"/>
    <lineage>
        <taxon>Bacteria</taxon>
        <taxon>Pseudomonadati</taxon>
        <taxon>Pseudomonadota</taxon>
        <taxon>Gammaproteobacteria</taxon>
        <taxon>Vibrionales</taxon>
        <taxon>Vibrionaceae</taxon>
        <taxon>Vibrio</taxon>
    </lineage>
</organism>
<sequence length="329" mass="37616">MSQYVVCALYKFVALDDYQEIRQPLTEVLEANQIRGTLLLASEGINGTVAGKRESIDALLQWFKQDSRLADVVYKESFNEEQPFNRTKVKLKKEIVTMGVEGIDPRHVVGTYVKPNEWNALISDPDVILVDTRNDYEVDIGTFKNAVNPNTETFREFPQYVEDNLDPKKHKKVAMFCTGGIRCEKSTAYMKEQGFDEVYHLEGGILKYLEEVPEEESMWEGDCYVFDGRVAVNHQLEKSGYDVCNACRLPITDEDKASDHFEKGVSCPKCIDKHSDEQKARFREREKQVQLSNARGETHVGGDAAHLIDQRKKEKLAHKEQQRSGKKAK</sequence>
<comment type="function">
    <text evidence="1">Catalyzes oxygen-dependent 5-hydroxyuridine (ho5U) modification at position 34 in tRNAs.</text>
</comment>
<comment type="catalytic activity">
    <reaction evidence="1">
        <text>uridine(34) in tRNA + AH2 + O2 = 5-hydroxyuridine(34) in tRNA + A + H2O</text>
        <dbReference type="Rhea" id="RHEA:64224"/>
        <dbReference type="Rhea" id="RHEA-COMP:11727"/>
        <dbReference type="Rhea" id="RHEA-COMP:13381"/>
        <dbReference type="ChEBI" id="CHEBI:13193"/>
        <dbReference type="ChEBI" id="CHEBI:15377"/>
        <dbReference type="ChEBI" id="CHEBI:15379"/>
        <dbReference type="ChEBI" id="CHEBI:17499"/>
        <dbReference type="ChEBI" id="CHEBI:65315"/>
        <dbReference type="ChEBI" id="CHEBI:136877"/>
    </reaction>
</comment>
<comment type="similarity">
    <text evidence="1">Belongs to the TrhO family.</text>
</comment>
<reference key="1">
    <citation type="submission" date="2009-02" db="EMBL/GenBank/DDBJ databases">
        <title>Vibrio splendidus str. LGP32 complete genome.</title>
        <authorList>
            <person name="Mazel D."/>
            <person name="Le Roux F."/>
        </authorList>
    </citation>
    <scope>NUCLEOTIDE SEQUENCE [LARGE SCALE GENOMIC DNA]</scope>
    <source>
        <strain>LGP32</strain>
    </source>
</reference>
<accession>B7VTF0</accession>
<evidence type="ECO:0000255" key="1">
    <source>
        <dbReference type="HAMAP-Rule" id="MF_00469"/>
    </source>
</evidence>
<evidence type="ECO:0000256" key="2">
    <source>
        <dbReference type="SAM" id="MobiDB-lite"/>
    </source>
</evidence>